<accession>Q3API2</accession>
<sequence length="89" mass="10270">MEQTVPVRGRKKSWTGKVVSDKMDKACVIAVERRVQHPVYKKYFKKTTRLMVHDENNEAGVGDLVRVVECRPLSKRKSCRLAEIVEKAK</sequence>
<organism>
    <name type="scientific">Chlorobium chlorochromatii (strain CaD3)</name>
    <dbReference type="NCBI Taxonomy" id="340177"/>
    <lineage>
        <taxon>Bacteria</taxon>
        <taxon>Pseudomonadati</taxon>
        <taxon>Chlorobiota</taxon>
        <taxon>Chlorobiia</taxon>
        <taxon>Chlorobiales</taxon>
        <taxon>Chlorobiaceae</taxon>
        <taxon>Chlorobium/Pelodictyon group</taxon>
        <taxon>Chlorobium</taxon>
    </lineage>
</organism>
<protein>
    <recommendedName>
        <fullName evidence="1">Small ribosomal subunit protein uS17</fullName>
    </recommendedName>
    <alternativeName>
        <fullName evidence="2">30S ribosomal protein S17</fullName>
    </alternativeName>
</protein>
<evidence type="ECO:0000255" key="1">
    <source>
        <dbReference type="HAMAP-Rule" id="MF_01345"/>
    </source>
</evidence>
<evidence type="ECO:0000305" key="2"/>
<keyword id="KW-0687">Ribonucleoprotein</keyword>
<keyword id="KW-0689">Ribosomal protein</keyword>
<keyword id="KW-0694">RNA-binding</keyword>
<keyword id="KW-0699">rRNA-binding</keyword>
<dbReference type="EMBL" id="CP000108">
    <property type="protein sequence ID" value="ABB29093.1"/>
    <property type="molecule type" value="Genomic_DNA"/>
</dbReference>
<dbReference type="SMR" id="Q3API2"/>
<dbReference type="STRING" id="340177.Cag_1842"/>
<dbReference type="KEGG" id="cch:Cag_1842"/>
<dbReference type="eggNOG" id="COG0186">
    <property type="taxonomic scope" value="Bacteria"/>
</dbReference>
<dbReference type="HOGENOM" id="CLU_073626_1_1_10"/>
<dbReference type="OrthoDB" id="9811714at2"/>
<dbReference type="GO" id="GO:0022627">
    <property type="term" value="C:cytosolic small ribosomal subunit"/>
    <property type="evidence" value="ECO:0007669"/>
    <property type="project" value="TreeGrafter"/>
</dbReference>
<dbReference type="GO" id="GO:0019843">
    <property type="term" value="F:rRNA binding"/>
    <property type="evidence" value="ECO:0007669"/>
    <property type="project" value="UniProtKB-UniRule"/>
</dbReference>
<dbReference type="GO" id="GO:0003735">
    <property type="term" value="F:structural constituent of ribosome"/>
    <property type="evidence" value="ECO:0007669"/>
    <property type="project" value="InterPro"/>
</dbReference>
<dbReference type="GO" id="GO:0006412">
    <property type="term" value="P:translation"/>
    <property type="evidence" value="ECO:0007669"/>
    <property type="project" value="UniProtKB-UniRule"/>
</dbReference>
<dbReference type="CDD" id="cd00364">
    <property type="entry name" value="Ribosomal_uS17"/>
    <property type="match status" value="1"/>
</dbReference>
<dbReference type="Gene3D" id="2.40.50.140">
    <property type="entry name" value="Nucleic acid-binding proteins"/>
    <property type="match status" value="1"/>
</dbReference>
<dbReference type="HAMAP" id="MF_01345_B">
    <property type="entry name" value="Ribosomal_uS17_B"/>
    <property type="match status" value="1"/>
</dbReference>
<dbReference type="InterPro" id="IPR012340">
    <property type="entry name" value="NA-bd_OB-fold"/>
</dbReference>
<dbReference type="InterPro" id="IPR000266">
    <property type="entry name" value="Ribosomal_uS17"/>
</dbReference>
<dbReference type="InterPro" id="IPR019984">
    <property type="entry name" value="Ribosomal_uS17_bact/chlr"/>
</dbReference>
<dbReference type="InterPro" id="IPR019979">
    <property type="entry name" value="Ribosomal_uS17_CS"/>
</dbReference>
<dbReference type="NCBIfam" id="NF004123">
    <property type="entry name" value="PRK05610.1"/>
    <property type="match status" value="1"/>
</dbReference>
<dbReference type="NCBIfam" id="TIGR03635">
    <property type="entry name" value="uS17_bact"/>
    <property type="match status" value="1"/>
</dbReference>
<dbReference type="PANTHER" id="PTHR10744">
    <property type="entry name" value="40S RIBOSOMAL PROTEIN S11 FAMILY MEMBER"/>
    <property type="match status" value="1"/>
</dbReference>
<dbReference type="PANTHER" id="PTHR10744:SF1">
    <property type="entry name" value="SMALL RIBOSOMAL SUBUNIT PROTEIN US17M"/>
    <property type="match status" value="1"/>
</dbReference>
<dbReference type="Pfam" id="PF00366">
    <property type="entry name" value="Ribosomal_S17"/>
    <property type="match status" value="1"/>
</dbReference>
<dbReference type="PRINTS" id="PR00973">
    <property type="entry name" value="RIBOSOMALS17"/>
</dbReference>
<dbReference type="SUPFAM" id="SSF50249">
    <property type="entry name" value="Nucleic acid-binding proteins"/>
    <property type="match status" value="1"/>
</dbReference>
<dbReference type="PROSITE" id="PS00056">
    <property type="entry name" value="RIBOSOMAL_S17"/>
    <property type="match status" value="1"/>
</dbReference>
<gene>
    <name evidence="1" type="primary">rpsQ</name>
    <name type="ordered locus">Cag_1842</name>
</gene>
<name>RS17_CHLCH</name>
<feature type="chain" id="PRO_0000233457" description="Small ribosomal subunit protein uS17">
    <location>
        <begin position="1"/>
        <end position="89"/>
    </location>
</feature>
<reference key="1">
    <citation type="submission" date="2005-08" db="EMBL/GenBank/DDBJ databases">
        <title>Complete sequence of Chlorobium chlorochromatii CaD3.</title>
        <authorList>
            <consortium name="US DOE Joint Genome Institute"/>
            <person name="Copeland A."/>
            <person name="Lucas S."/>
            <person name="Lapidus A."/>
            <person name="Barry K."/>
            <person name="Detter J.C."/>
            <person name="Glavina T."/>
            <person name="Hammon N."/>
            <person name="Israni S."/>
            <person name="Pitluck S."/>
            <person name="Bryant D."/>
            <person name="Schmutz J."/>
            <person name="Larimer F."/>
            <person name="Land M."/>
            <person name="Kyrpides N."/>
            <person name="Ivanova N."/>
            <person name="Richardson P."/>
        </authorList>
    </citation>
    <scope>NUCLEOTIDE SEQUENCE [LARGE SCALE GENOMIC DNA]</scope>
    <source>
        <strain>CaD3</strain>
    </source>
</reference>
<proteinExistence type="inferred from homology"/>
<comment type="function">
    <text evidence="1">One of the primary rRNA binding proteins, it binds specifically to the 5'-end of 16S ribosomal RNA.</text>
</comment>
<comment type="subunit">
    <text evidence="1">Part of the 30S ribosomal subunit.</text>
</comment>
<comment type="similarity">
    <text evidence="1">Belongs to the universal ribosomal protein uS17 family.</text>
</comment>